<comment type="function">
    <text evidence="1">Leucine-rich repeat receptor-like protein kinase that may play a role in vascular tissues development.</text>
</comment>
<comment type="interaction">
    <interactant intactId="EBI-1238200">
        <id>Q9LZV7</id>
    </interactant>
    <interactant intactId="EBI-16963709">
        <id>C0LGD6</id>
        <label>At1g05700</label>
    </interactant>
    <organismsDiffer>false</organismsDiffer>
    <experiments>2</experiments>
</comment>
<comment type="interaction">
    <interactant intactId="EBI-1238200">
        <id>Q9LZV7</id>
    </interactant>
    <interactant intactId="EBI-16907406">
        <id>C0LGD8</id>
        <label>At1g07550</label>
    </interactant>
    <organismsDiffer>false</organismsDiffer>
    <experiments>2</experiments>
</comment>
<comment type="interaction">
    <interactant intactId="EBI-1238200">
        <id>Q9LZV7</id>
    </interactant>
    <interactant intactId="EBI-20653376">
        <id>Q9FZB8-2</id>
        <label>At1g51810</label>
    </interactant>
    <organismsDiffer>false</organismsDiffer>
    <experiments>2</experiments>
</comment>
<comment type="interaction">
    <interactant intactId="EBI-1238200">
        <id>Q9LZV7</id>
    </interactant>
    <interactant intactId="EBI-17066817">
        <id>C0LGG3</id>
        <label>At1g51820</label>
    </interactant>
    <organismsDiffer>false</organismsDiffer>
    <experiments>3</experiments>
</comment>
<comment type="interaction">
    <interactant intactId="EBI-1238200">
        <id>Q9LZV7</id>
    </interactant>
    <interactant intactId="EBI-17070892">
        <id>C0LGI2</id>
        <label>At1g67720</label>
    </interactant>
    <organismsDiffer>false</organismsDiffer>
    <experiments>2</experiments>
</comment>
<comment type="interaction">
    <interactant intactId="EBI-1238200">
        <id>Q9LZV7</id>
    </interactant>
    <interactant intactId="EBI-1238661">
        <id>Q9M9C5</id>
        <label>At1g68400</label>
    </interactant>
    <organismsDiffer>false</organismsDiffer>
    <experiments>3</experiments>
</comment>
<comment type="interaction">
    <interactant intactId="EBI-1238200">
        <id>Q9LZV7</id>
    </interactant>
    <interactant intactId="EBI-20651541">
        <id>C0LGJ9</id>
        <label>At2g02780</label>
    </interactant>
    <organismsDiffer>false</organismsDiffer>
    <experiments>2</experiments>
</comment>
<comment type="interaction">
    <interactant intactId="EBI-1238200">
        <id>Q9LZV7</id>
    </interactant>
    <interactant intactId="EBI-16946048">
        <id>C0LGL4</id>
        <label>At2g28960</label>
    </interactant>
    <organismsDiffer>false</organismsDiffer>
    <experiments>2</experiments>
</comment>
<comment type="interaction">
    <interactant intactId="EBI-1238200">
        <id>Q9LZV7</id>
    </interactant>
    <interactant intactId="EBI-17121875">
        <id>C0LGQ7</id>
        <label>At4g20450</label>
    </interactant>
    <organismsDiffer>false</organismsDiffer>
    <experiments>2</experiments>
</comment>
<comment type="interaction">
    <interactant intactId="EBI-1238200">
        <id>Q9LZV7</id>
    </interactant>
    <interactant intactId="EBI-16905069">
        <id>C0LGQ5</id>
        <label>GSO1</label>
    </interactant>
    <organismsDiffer>false</organismsDiffer>
    <experiments>2</experiments>
</comment>
<comment type="interaction">
    <interactant intactId="EBI-1238200">
        <id>Q9LZV7</id>
    </interactant>
    <interactant intactId="EBI-20657203">
        <id>C0LGP3</id>
        <label>LRR-RLK</label>
    </interactant>
    <organismsDiffer>false</organismsDiffer>
    <experiments>2</experiments>
</comment>
<comment type="interaction">
    <interactant intactId="EBI-1238200">
        <id>Q9LZV7</id>
    </interactant>
    <interactant intactId="EBI-6299033">
        <id>Q9XIC7</id>
        <label>SERK2</label>
    </interactant>
    <organismsDiffer>false</organismsDiffer>
    <experiments>2</experiments>
</comment>
<comment type="interaction">
    <interactant intactId="EBI-1238200">
        <id>Q9LZV7</id>
    </interactant>
    <interactant intactId="EBI-16905038">
        <id>O64483</id>
        <label>SIRK</label>
    </interactant>
    <organismsDiffer>false</organismsDiffer>
    <experiments>2</experiments>
</comment>
<comment type="subcellular location">
    <subcellularLocation>
        <location evidence="7">Cell membrane</location>
        <topology evidence="2">Single-pass type I membrane protein</topology>
    </subcellularLocation>
</comment>
<comment type="tissue specificity">
    <text evidence="5">Expressed in the vascular strands of cotyledons, the shoot apex, hypocotyls, roots, leaves, stems and flowers.</text>
</comment>
<comment type="domain">
    <text evidence="3">The protein kinase domain is predicted to be catalytically inactive.</text>
</comment>
<comment type="similarity">
    <text evidence="3">Belongs to the protein kinase superfamily. Ser/Thr protein kinase family.</text>
</comment>
<name>PXC2_ARATH</name>
<protein>
    <recommendedName>
        <fullName evidence="7">Leucine-rich repeat receptor-like protein kinase PXC2</fullName>
    </recommendedName>
    <alternativeName>
        <fullName evidence="6">Protein PXY/TDR-CORRELATED 2</fullName>
    </alternativeName>
</protein>
<organism>
    <name type="scientific">Arabidopsis thaliana</name>
    <name type="common">Mouse-ear cress</name>
    <dbReference type="NCBI Taxonomy" id="3702"/>
    <lineage>
        <taxon>Eukaryota</taxon>
        <taxon>Viridiplantae</taxon>
        <taxon>Streptophyta</taxon>
        <taxon>Embryophyta</taxon>
        <taxon>Tracheophyta</taxon>
        <taxon>Spermatophyta</taxon>
        <taxon>Magnoliopsida</taxon>
        <taxon>eudicotyledons</taxon>
        <taxon>Gunneridae</taxon>
        <taxon>Pentapetalae</taxon>
        <taxon>rosids</taxon>
        <taxon>malvids</taxon>
        <taxon>Brassicales</taxon>
        <taxon>Brassicaceae</taxon>
        <taxon>Camelineae</taxon>
        <taxon>Arabidopsis</taxon>
    </lineage>
</organism>
<proteinExistence type="evidence at protein level"/>
<keyword id="KW-0067">ATP-binding</keyword>
<keyword id="KW-1003">Cell membrane</keyword>
<keyword id="KW-0325">Glycoprotein</keyword>
<keyword id="KW-0433">Leucine-rich repeat</keyword>
<keyword id="KW-0472">Membrane</keyword>
<keyword id="KW-0547">Nucleotide-binding</keyword>
<keyword id="KW-0675">Receptor</keyword>
<keyword id="KW-1185">Reference proteome</keyword>
<keyword id="KW-0677">Repeat</keyword>
<keyword id="KW-0732">Signal</keyword>
<keyword id="KW-0812">Transmembrane</keyword>
<keyword id="KW-1133">Transmembrane helix</keyword>
<reference key="1">
    <citation type="journal article" date="2000" name="Nature">
        <title>Sequence and analysis of chromosome 5 of the plant Arabidopsis thaliana.</title>
        <authorList>
            <person name="Tabata S."/>
            <person name="Kaneko T."/>
            <person name="Nakamura Y."/>
            <person name="Kotani H."/>
            <person name="Kato T."/>
            <person name="Asamizu E."/>
            <person name="Miyajima N."/>
            <person name="Sasamoto S."/>
            <person name="Kimura T."/>
            <person name="Hosouchi T."/>
            <person name="Kawashima K."/>
            <person name="Kohara M."/>
            <person name="Matsumoto M."/>
            <person name="Matsuno A."/>
            <person name="Muraki A."/>
            <person name="Nakayama S."/>
            <person name="Nakazaki N."/>
            <person name="Naruo K."/>
            <person name="Okumura S."/>
            <person name="Shinpo S."/>
            <person name="Takeuchi C."/>
            <person name="Wada T."/>
            <person name="Watanabe A."/>
            <person name="Yamada M."/>
            <person name="Yasuda M."/>
            <person name="Sato S."/>
            <person name="de la Bastide M."/>
            <person name="Huang E."/>
            <person name="Spiegel L."/>
            <person name="Gnoj L."/>
            <person name="O'Shaughnessy A."/>
            <person name="Preston R."/>
            <person name="Habermann K."/>
            <person name="Murray J."/>
            <person name="Johnson D."/>
            <person name="Rohlfing T."/>
            <person name="Nelson J."/>
            <person name="Stoneking T."/>
            <person name="Pepin K."/>
            <person name="Spieth J."/>
            <person name="Sekhon M."/>
            <person name="Armstrong J."/>
            <person name="Becker M."/>
            <person name="Belter E."/>
            <person name="Cordum H."/>
            <person name="Cordes M."/>
            <person name="Courtney L."/>
            <person name="Courtney W."/>
            <person name="Dante M."/>
            <person name="Du H."/>
            <person name="Edwards J."/>
            <person name="Fryman J."/>
            <person name="Haakensen B."/>
            <person name="Lamar E."/>
            <person name="Latreille P."/>
            <person name="Leonard S."/>
            <person name="Meyer R."/>
            <person name="Mulvaney E."/>
            <person name="Ozersky P."/>
            <person name="Riley A."/>
            <person name="Strowmatt C."/>
            <person name="Wagner-McPherson C."/>
            <person name="Wollam A."/>
            <person name="Yoakum M."/>
            <person name="Bell M."/>
            <person name="Dedhia N."/>
            <person name="Parnell L."/>
            <person name="Shah R."/>
            <person name="Rodriguez M."/>
            <person name="Hoon See L."/>
            <person name="Vil D."/>
            <person name="Baker J."/>
            <person name="Kirchoff K."/>
            <person name="Toth K."/>
            <person name="King L."/>
            <person name="Bahret A."/>
            <person name="Miller B."/>
            <person name="Marra M.A."/>
            <person name="Martienssen R."/>
            <person name="McCombie W.R."/>
            <person name="Wilson R.K."/>
            <person name="Murphy G."/>
            <person name="Bancroft I."/>
            <person name="Volckaert G."/>
            <person name="Wambutt R."/>
            <person name="Duesterhoeft A."/>
            <person name="Stiekema W."/>
            <person name="Pohl T."/>
            <person name="Entian K.-D."/>
            <person name="Terryn N."/>
            <person name="Hartley N."/>
            <person name="Bent E."/>
            <person name="Johnson S."/>
            <person name="Langham S.-A."/>
            <person name="McCullagh B."/>
            <person name="Robben J."/>
            <person name="Grymonprez B."/>
            <person name="Zimmermann W."/>
            <person name="Ramsperger U."/>
            <person name="Wedler H."/>
            <person name="Balke K."/>
            <person name="Wedler E."/>
            <person name="Peters S."/>
            <person name="van Staveren M."/>
            <person name="Dirkse W."/>
            <person name="Mooijman P."/>
            <person name="Klein Lankhorst R."/>
            <person name="Weitzenegger T."/>
            <person name="Bothe G."/>
            <person name="Rose M."/>
            <person name="Hauf J."/>
            <person name="Berneiser S."/>
            <person name="Hempel S."/>
            <person name="Feldpausch M."/>
            <person name="Lamberth S."/>
            <person name="Villarroel R."/>
            <person name="Gielen J."/>
            <person name="Ardiles W."/>
            <person name="Bents O."/>
            <person name="Lemcke K."/>
            <person name="Kolesov G."/>
            <person name="Mayer K.F.X."/>
            <person name="Rudd S."/>
            <person name="Schoof H."/>
            <person name="Schueller C."/>
            <person name="Zaccaria P."/>
            <person name="Mewes H.-W."/>
            <person name="Bevan M."/>
            <person name="Fransz P.F."/>
        </authorList>
    </citation>
    <scope>NUCLEOTIDE SEQUENCE [LARGE SCALE GENOMIC DNA]</scope>
    <source>
        <strain>cv. Columbia</strain>
    </source>
</reference>
<reference key="2">
    <citation type="journal article" date="2017" name="Plant J.">
        <title>Araport11: a complete reannotation of the Arabidopsis thaliana reference genome.</title>
        <authorList>
            <person name="Cheng C.Y."/>
            <person name="Krishnakumar V."/>
            <person name="Chan A.P."/>
            <person name="Thibaud-Nissen F."/>
            <person name="Schobel S."/>
            <person name="Town C.D."/>
        </authorList>
    </citation>
    <scope>GENOME REANNOTATION</scope>
    <source>
        <strain>cv. Columbia</strain>
    </source>
</reference>
<reference key="3">
    <citation type="journal article" date="2003" name="Science">
        <title>Empirical analysis of transcriptional activity in the Arabidopsis genome.</title>
        <authorList>
            <person name="Yamada K."/>
            <person name="Lim J."/>
            <person name="Dale J.M."/>
            <person name="Chen H."/>
            <person name="Shinn P."/>
            <person name="Palm C.J."/>
            <person name="Southwick A.M."/>
            <person name="Wu H.C."/>
            <person name="Kim C.J."/>
            <person name="Nguyen M."/>
            <person name="Pham P.K."/>
            <person name="Cheuk R.F."/>
            <person name="Karlin-Newmann G."/>
            <person name="Liu S.X."/>
            <person name="Lam B."/>
            <person name="Sakano H."/>
            <person name="Wu T."/>
            <person name="Yu G."/>
            <person name="Miranda M."/>
            <person name="Quach H.L."/>
            <person name="Tripp M."/>
            <person name="Chang C.H."/>
            <person name="Lee J.M."/>
            <person name="Toriumi M.J."/>
            <person name="Chan M.M."/>
            <person name="Tang C.C."/>
            <person name="Onodera C.S."/>
            <person name="Deng J.M."/>
            <person name="Akiyama K."/>
            <person name="Ansari Y."/>
            <person name="Arakawa T."/>
            <person name="Banh J."/>
            <person name="Banno F."/>
            <person name="Bowser L."/>
            <person name="Brooks S.Y."/>
            <person name="Carninci P."/>
            <person name="Chao Q."/>
            <person name="Choy N."/>
            <person name="Enju A."/>
            <person name="Goldsmith A.D."/>
            <person name="Gurjal M."/>
            <person name="Hansen N.F."/>
            <person name="Hayashizaki Y."/>
            <person name="Johnson-Hopson C."/>
            <person name="Hsuan V.W."/>
            <person name="Iida K."/>
            <person name="Karnes M."/>
            <person name="Khan S."/>
            <person name="Koesema E."/>
            <person name="Ishida J."/>
            <person name="Jiang P.X."/>
            <person name="Jones T."/>
            <person name="Kawai J."/>
            <person name="Kamiya A."/>
            <person name="Meyers C."/>
            <person name="Nakajima M."/>
            <person name="Narusaka M."/>
            <person name="Seki M."/>
            <person name="Sakurai T."/>
            <person name="Satou M."/>
            <person name="Tamse R."/>
            <person name="Vaysberg M."/>
            <person name="Wallender E.K."/>
            <person name="Wong C."/>
            <person name="Yamamura Y."/>
            <person name="Yuan S."/>
            <person name="Shinozaki K."/>
            <person name="Davis R.W."/>
            <person name="Theologis A."/>
            <person name="Ecker J.R."/>
        </authorList>
    </citation>
    <scope>NUCLEOTIDE SEQUENCE [LARGE SCALE MRNA]</scope>
    <source>
        <strain>cv. Columbia</strain>
    </source>
</reference>
<reference key="4">
    <citation type="journal article" date="2010" name="BMC Genomics">
        <title>Genome-wide cloning and sequence analysis of leucine-rich repeat receptor-like protein kinase genes in Arabidopsis thaliana.</title>
        <authorList>
            <person name="Gou X."/>
            <person name="He K."/>
            <person name="Yang H."/>
            <person name="Yuan T."/>
            <person name="Lin H."/>
            <person name="Clouse S.D."/>
            <person name="Li J."/>
        </authorList>
    </citation>
    <scope>NUCLEOTIDE SEQUENCE [LARGE SCALE MRNA]</scope>
    <source>
        <strain>cv. Columbia</strain>
    </source>
</reference>
<reference key="5">
    <citation type="journal article" date="2013" name="BMC Plant Biol.">
        <title>The Arabidopsis LRR-RLK, PXC1, is a regulator of secondary wall formation correlated with the TDIF-PXY/TDR-WOX4 signaling pathway.</title>
        <authorList>
            <person name="Wang J."/>
            <person name="Kucukoglu M."/>
            <person name="Zhang L."/>
            <person name="Chen P."/>
            <person name="Decker D."/>
            <person name="Nilsson O."/>
            <person name="Jones B."/>
            <person name="Sandberg G."/>
            <person name="Zheng B."/>
        </authorList>
    </citation>
    <scope>TISSUE SPECIFICITY</scope>
</reference>
<sequence length="967" mass="104179">MFNGAVSLLFLFLAVVSARADPTFNDDVLGLIVFKAGLDDPLSKLSSWNSEDYDPCNWVGCTCDPATNRVSELRLDAFSLSGHIGRGLLRLQFLHTLVLSNNNLTGTLNPEFPHLGSLQVVDFSGNNLSGRIPDGFFEQCGSLRSVSLANNKLTGSIPVSLSYCSTLTHLNLSSNQLSGRLPRDIWFLKSLKSLDFSHNFLQGDIPDGLGGLYDLRHINLSRNWFSGDVPSDIGRCSSLKSLDLSENYFSGNLPDSMKSLGSCSSIRLRGNSLIGEIPDWIGDIATLEILDLSANNFTGTVPFSLGNLEFLKDLNLSANMLAGELPQTLSNCSNLISIDVSKNSFTGDVLKWMFTGNSESSSLSRFSLHKRSGNDTIMPIVGFLQGLRVLDLSSNGFTGELPSNIWILTSLLQLNMSTNSLFGSIPTGIGGLKVAEILDLSSNLLNGTLPSEIGGAVSLKQLHLHRNRLSGQIPAKISNCSALNTINLSENELSGAIPGSIGSLSNLEYIDLSRNNLSGSLPKEIEKLSHLLTFNISHNNITGELPAGGFFNTIPLSAVTGNPSLCGSVVNRSCLSVHPKPIVLNPNSSNPTNGPALTGQIRKSVLSISALIAIGAAAVIAIGVVAVTLLNVHARSSVSRHDAAAALALSVGETFSCSPSKDQEFGKLVMFSGEVDVFDTTGADALLNKDSELGRGGFGVVYKTSLQDGRPVAVKKLTVSGLIKSQEEFEREMRKLGKLRHKNVVEIKGYYWTQSLQLLIHEFVSGGSLYRHLHGDESVCLTWRQRFSIILGIARGLAFLHSSNITHYNMKATNVLIDAAGEAKVSDFGLARLLASALDRCVLSGKVQSALGYTAPEFACRTVKITDRCDVYGFGILVLEVVTGKRPVEYAEDDVVVLCETVREGLEEGRVEECVDPRLRGNFPAEEAIPVIKLGLVCGSQVPSNRPEMEEVVKILELIQCPSHDLE</sequence>
<dbReference type="EMBL" id="AL162351">
    <property type="protein sequence ID" value="CAB82759.1"/>
    <property type="molecule type" value="Genomic_DNA"/>
</dbReference>
<dbReference type="EMBL" id="CP002688">
    <property type="protein sequence ID" value="AED90406.1"/>
    <property type="molecule type" value="Genomic_DNA"/>
</dbReference>
<dbReference type="EMBL" id="AF424563">
    <property type="protein sequence ID" value="AAL11557.1"/>
    <property type="molecule type" value="mRNA"/>
</dbReference>
<dbReference type="EMBL" id="BT004520">
    <property type="protein sequence ID" value="AAO42766.1"/>
    <property type="molecule type" value="mRNA"/>
</dbReference>
<dbReference type="EMBL" id="FJ708767">
    <property type="protein sequence ID" value="ACN59360.1"/>
    <property type="molecule type" value="mRNA"/>
</dbReference>
<dbReference type="PIR" id="T48210">
    <property type="entry name" value="T48210"/>
</dbReference>
<dbReference type="RefSeq" id="NP_195809.1">
    <property type="nucleotide sequence ID" value="NM_120267.3"/>
</dbReference>
<dbReference type="SMR" id="Q9LZV7"/>
<dbReference type="FunCoup" id="Q9LZV7">
    <property type="interactions" value="31"/>
</dbReference>
<dbReference type="IntAct" id="Q9LZV7">
    <property type="interactions" value="43"/>
</dbReference>
<dbReference type="STRING" id="3702.Q9LZV7"/>
<dbReference type="GlyCosmos" id="Q9LZV7">
    <property type="glycosylation" value="17 sites, No reported glycans"/>
</dbReference>
<dbReference type="GlyGen" id="Q9LZV7">
    <property type="glycosylation" value="17 sites"/>
</dbReference>
<dbReference type="PaxDb" id="3702-AT5G01890.1"/>
<dbReference type="ProteomicsDB" id="224807"/>
<dbReference type="EnsemblPlants" id="AT5G01890.1">
    <property type="protein sequence ID" value="AT5G01890.1"/>
    <property type="gene ID" value="AT5G01890"/>
</dbReference>
<dbReference type="GeneID" id="831677"/>
<dbReference type="Gramene" id="AT5G01890.1">
    <property type="protein sequence ID" value="AT5G01890.1"/>
    <property type="gene ID" value="AT5G01890"/>
</dbReference>
<dbReference type="KEGG" id="ath:AT5G01890"/>
<dbReference type="Araport" id="AT5G01890"/>
<dbReference type="TAIR" id="AT5G01890">
    <property type="gene designation" value="PXC2"/>
</dbReference>
<dbReference type="eggNOG" id="ENOG502QT06">
    <property type="taxonomic scope" value="Eukaryota"/>
</dbReference>
<dbReference type="HOGENOM" id="CLU_000288_22_1_1"/>
<dbReference type="InParanoid" id="Q9LZV7"/>
<dbReference type="OMA" id="HVPSWIF"/>
<dbReference type="PhylomeDB" id="Q9LZV7"/>
<dbReference type="PRO" id="PR:Q9LZV7"/>
<dbReference type="Proteomes" id="UP000006548">
    <property type="component" value="Chromosome 5"/>
</dbReference>
<dbReference type="ExpressionAtlas" id="Q9LZV7">
    <property type="expression patterns" value="baseline and differential"/>
</dbReference>
<dbReference type="GO" id="GO:0005886">
    <property type="term" value="C:plasma membrane"/>
    <property type="evidence" value="ECO:0007669"/>
    <property type="project" value="UniProtKB-SubCell"/>
</dbReference>
<dbReference type="GO" id="GO:0005524">
    <property type="term" value="F:ATP binding"/>
    <property type="evidence" value="ECO:0007669"/>
    <property type="project" value="UniProtKB-KW"/>
</dbReference>
<dbReference type="GO" id="GO:0004672">
    <property type="term" value="F:protein kinase activity"/>
    <property type="evidence" value="ECO:0007669"/>
    <property type="project" value="InterPro"/>
</dbReference>
<dbReference type="CDD" id="cd14066">
    <property type="entry name" value="STKc_IRAK"/>
    <property type="match status" value="1"/>
</dbReference>
<dbReference type="FunFam" id="3.80.10.10:FF:000413">
    <property type="entry name" value="Inactive leucine-rich repeat receptor-like protein kinase"/>
    <property type="match status" value="1"/>
</dbReference>
<dbReference type="FunFam" id="3.80.10.10:FF:000077">
    <property type="entry name" value="LRR receptor-like serine/threonine-protein kinase ERL1"/>
    <property type="match status" value="1"/>
</dbReference>
<dbReference type="FunFam" id="1.10.510.10:FF:000267">
    <property type="entry name" value="probable LRR receptor-like serine/threonine-protein kinase IRK"/>
    <property type="match status" value="1"/>
</dbReference>
<dbReference type="FunFam" id="3.30.200.20:FF:000295">
    <property type="entry name" value="probable LRR receptor-like serine/threonine-protein kinase IRK"/>
    <property type="match status" value="1"/>
</dbReference>
<dbReference type="FunFam" id="3.80.10.10:FF:000402">
    <property type="entry name" value="Putative LRR receptor-like serine/threonine-protein kinase IRK"/>
    <property type="match status" value="1"/>
</dbReference>
<dbReference type="Gene3D" id="3.30.200.20">
    <property type="entry name" value="Phosphorylase Kinase, domain 1"/>
    <property type="match status" value="1"/>
</dbReference>
<dbReference type="Gene3D" id="3.80.10.10">
    <property type="entry name" value="Ribonuclease Inhibitor"/>
    <property type="match status" value="3"/>
</dbReference>
<dbReference type="Gene3D" id="1.10.510.10">
    <property type="entry name" value="Transferase(Phosphotransferase) domain 1"/>
    <property type="match status" value="1"/>
</dbReference>
<dbReference type="InterPro" id="IPR011009">
    <property type="entry name" value="Kinase-like_dom_sf"/>
</dbReference>
<dbReference type="InterPro" id="IPR001611">
    <property type="entry name" value="Leu-rich_rpt"/>
</dbReference>
<dbReference type="InterPro" id="IPR003591">
    <property type="entry name" value="Leu-rich_rpt_typical-subtyp"/>
</dbReference>
<dbReference type="InterPro" id="IPR032675">
    <property type="entry name" value="LRR_dom_sf"/>
</dbReference>
<dbReference type="InterPro" id="IPR013210">
    <property type="entry name" value="LRR_N_plant-typ"/>
</dbReference>
<dbReference type="InterPro" id="IPR051716">
    <property type="entry name" value="Plant_RL_S/T_kinase"/>
</dbReference>
<dbReference type="InterPro" id="IPR000719">
    <property type="entry name" value="Prot_kinase_dom"/>
</dbReference>
<dbReference type="InterPro" id="IPR017441">
    <property type="entry name" value="Protein_kinase_ATP_BS"/>
</dbReference>
<dbReference type="InterPro" id="IPR001245">
    <property type="entry name" value="Ser-Thr/Tyr_kinase_cat_dom"/>
</dbReference>
<dbReference type="PANTHER" id="PTHR48053">
    <property type="entry name" value="LEUCINE RICH REPEAT FAMILY PROTEIN, EXPRESSED"/>
    <property type="match status" value="1"/>
</dbReference>
<dbReference type="PANTHER" id="PTHR48053:SF22">
    <property type="entry name" value="MDIS1-INTERACTING RECEPTOR LIKE KINASE 2-LIKE"/>
    <property type="match status" value="1"/>
</dbReference>
<dbReference type="Pfam" id="PF00560">
    <property type="entry name" value="LRR_1"/>
    <property type="match status" value="7"/>
</dbReference>
<dbReference type="Pfam" id="PF13855">
    <property type="entry name" value="LRR_8"/>
    <property type="match status" value="2"/>
</dbReference>
<dbReference type="Pfam" id="PF08263">
    <property type="entry name" value="LRRNT_2"/>
    <property type="match status" value="1"/>
</dbReference>
<dbReference type="Pfam" id="PF07714">
    <property type="entry name" value="PK_Tyr_Ser-Thr"/>
    <property type="match status" value="1"/>
</dbReference>
<dbReference type="PRINTS" id="PR00019">
    <property type="entry name" value="LEURICHRPT"/>
</dbReference>
<dbReference type="SMART" id="SM00369">
    <property type="entry name" value="LRR_TYP"/>
    <property type="match status" value="7"/>
</dbReference>
<dbReference type="SUPFAM" id="SSF52058">
    <property type="entry name" value="L domain-like"/>
    <property type="match status" value="1"/>
</dbReference>
<dbReference type="SUPFAM" id="SSF56112">
    <property type="entry name" value="Protein kinase-like (PK-like)"/>
    <property type="match status" value="1"/>
</dbReference>
<dbReference type="SUPFAM" id="SSF52047">
    <property type="entry name" value="RNI-like"/>
    <property type="match status" value="1"/>
</dbReference>
<dbReference type="PROSITE" id="PS00107">
    <property type="entry name" value="PROTEIN_KINASE_ATP"/>
    <property type="match status" value="1"/>
</dbReference>
<dbReference type="PROSITE" id="PS50011">
    <property type="entry name" value="PROTEIN_KINASE_DOM"/>
    <property type="match status" value="1"/>
</dbReference>
<feature type="signal peptide" evidence="2">
    <location>
        <begin position="1"/>
        <end position="20"/>
    </location>
</feature>
<feature type="chain" id="PRO_0000432872" description="Leucine-rich repeat receptor-like protein kinase PXC2" evidence="2">
    <location>
        <begin position="21"/>
        <end position="967"/>
    </location>
</feature>
<feature type="topological domain" description="Extracellular" evidence="7">
    <location>
        <begin position="21"/>
        <end position="609"/>
    </location>
</feature>
<feature type="transmembrane region" description="Helical" evidence="2">
    <location>
        <begin position="610"/>
        <end position="630"/>
    </location>
</feature>
<feature type="topological domain" description="Cytoplasmic" evidence="7">
    <location>
        <begin position="631"/>
        <end position="967"/>
    </location>
</feature>
<feature type="repeat" description="LRR 1" evidence="2">
    <location>
        <begin position="91"/>
        <end position="114"/>
    </location>
</feature>
<feature type="repeat" description="LRR 2" evidence="2">
    <location>
        <begin position="115"/>
        <end position="139"/>
    </location>
</feature>
<feature type="repeat" description="LRR 3" evidence="2">
    <location>
        <begin position="141"/>
        <end position="164"/>
    </location>
</feature>
<feature type="repeat" description="LRR 4" evidence="2">
    <location>
        <begin position="165"/>
        <end position="189"/>
    </location>
</feature>
<feature type="repeat" description="LRR 5" evidence="2">
    <location>
        <begin position="191"/>
        <end position="212"/>
    </location>
</feature>
<feature type="repeat" description="LRR 6" evidence="2">
    <location>
        <begin position="214"/>
        <end position="236"/>
    </location>
</feature>
<feature type="repeat" description="LRR 7" evidence="2">
    <location>
        <begin position="237"/>
        <end position="260"/>
    </location>
</feature>
<feature type="repeat" description="LRR 8" evidence="2">
    <location>
        <begin position="262"/>
        <end position="284"/>
    </location>
</feature>
<feature type="repeat" description="LRR 9" evidence="2">
    <location>
        <begin position="285"/>
        <end position="307"/>
    </location>
</feature>
<feature type="repeat" description="LRR 10" evidence="2">
    <location>
        <begin position="308"/>
        <end position="332"/>
    </location>
</feature>
<feature type="repeat" description="LRR 11" evidence="2">
    <location>
        <begin position="334"/>
        <end position="356"/>
    </location>
</feature>
<feature type="repeat" description="LRR 12" evidence="2">
    <location>
        <begin position="384"/>
        <end position="408"/>
    </location>
</feature>
<feature type="repeat" description="LRR 13" evidence="2">
    <location>
        <begin position="410"/>
        <end position="432"/>
    </location>
</feature>
<feature type="repeat" description="LRR 14" evidence="2">
    <location>
        <begin position="433"/>
        <end position="456"/>
    </location>
</feature>
<feature type="repeat" description="LRR 15" evidence="2">
    <location>
        <begin position="457"/>
        <end position="480"/>
    </location>
</feature>
<feature type="repeat" description="LRR 16" evidence="2">
    <location>
        <begin position="482"/>
        <end position="503"/>
    </location>
</feature>
<feature type="repeat" description="LRR 17" evidence="2">
    <location>
        <begin position="504"/>
        <end position="528"/>
    </location>
</feature>
<feature type="repeat" description="LRR 18" evidence="2">
    <location>
        <begin position="530"/>
        <end position="552"/>
    </location>
</feature>
<feature type="domain" description="Protein kinase" evidence="3">
    <location>
        <begin position="687"/>
        <end position="959"/>
    </location>
</feature>
<feature type="binding site" evidence="3">
    <location>
        <begin position="693"/>
        <end position="701"/>
    </location>
    <ligand>
        <name>ATP</name>
        <dbReference type="ChEBI" id="CHEBI:30616"/>
    </ligand>
</feature>
<feature type="binding site" evidence="3">
    <location>
        <position position="715"/>
    </location>
    <ligand>
        <name>ATP</name>
        <dbReference type="ChEBI" id="CHEBI:30616"/>
    </ligand>
</feature>
<feature type="glycosylation site" description="N-linked (GlcNAc...) asparagine" evidence="4">
    <location>
        <position position="103"/>
    </location>
</feature>
<feature type="glycosylation site" description="N-linked (GlcNAc...) asparagine" evidence="4">
    <location>
        <position position="127"/>
    </location>
</feature>
<feature type="glycosylation site" description="N-linked (GlcNAc...) asparagine" evidence="4">
    <location>
        <position position="171"/>
    </location>
</feature>
<feature type="glycosylation site" description="N-linked (GlcNAc...) asparagine" evidence="4">
    <location>
        <position position="219"/>
    </location>
</feature>
<feature type="glycosylation site" description="N-linked (GlcNAc...) asparagine" evidence="4">
    <location>
        <position position="296"/>
    </location>
</feature>
<feature type="glycosylation site" description="N-linked (GlcNAc...) asparagine" evidence="4">
    <location>
        <position position="315"/>
    </location>
</feature>
<feature type="glycosylation site" description="N-linked (GlcNAc...) asparagine" evidence="4">
    <location>
        <position position="331"/>
    </location>
</feature>
<feature type="glycosylation site" description="N-linked (GlcNAc...) asparagine" evidence="4">
    <location>
        <position position="374"/>
    </location>
</feature>
<feature type="glycosylation site" description="N-linked (GlcNAc...) asparagine" evidence="4">
    <location>
        <position position="415"/>
    </location>
</feature>
<feature type="glycosylation site" description="N-linked (GlcNAc...) asparagine" evidence="4">
    <location>
        <position position="446"/>
    </location>
</feature>
<feature type="glycosylation site" description="N-linked (GlcNAc...) asparagine" evidence="4">
    <location>
        <position position="479"/>
    </location>
</feature>
<feature type="glycosylation site" description="N-linked (GlcNAc...) asparagine" evidence="4">
    <location>
        <position position="487"/>
    </location>
</feature>
<feature type="glycosylation site" description="N-linked (GlcNAc...) asparagine" evidence="4">
    <location>
        <position position="516"/>
    </location>
</feature>
<feature type="glycosylation site" description="N-linked (GlcNAc...) asparagine" evidence="4">
    <location>
        <position position="535"/>
    </location>
</feature>
<feature type="glycosylation site" description="N-linked (GlcNAc...) asparagine" evidence="4">
    <location>
        <position position="540"/>
    </location>
</feature>
<feature type="glycosylation site" description="N-linked (GlcNAc...) asparagine" evidence="4">
    <location>
        <position position="571"/>
    </location>
</feature>
<feature type="glycosylation site" description="N-linked (GlcNAc...) asparagine" evidence="4">
    <location>
        <position position="587"/>
    </location>
</feature>
<evidence type="ECO:0000250" key="1">
    <source>
        <dbReference type="UniProtKB" id="Q9SJQ1"/>
    </source>
</evidence>
<evidence type="ECO:0000255" key="2"/>
<evidence type="ECO:0000255" key="3">
    <source>
        <dbReference type="PROSITE-ProRule" id="PRU00159"/>
    </source>
</evidence>
<evidence type="ECO:0000255" key="4">
    <source>
        <dbReference type="PROSITE-ProRule" id="PRU00498"/>
    </source>
</evidence>
<evidence type="ECO:0000269" key="5">
    <source>
    </source>
</evidence>
<evidence type="ECO:0000303" key="6">
    <source>
    </source>
</evidence>
<evidence type="ECO:0000305" key="7"/>
<evidence type="ECO:0000312" key="8">
    <source>
        <dbReference type="Araport" id="AT5G01890"/>
    </source>
</evidence>
<gene>
    <name evidence="6" type="primary">PXC2</name>
    <name evidence="8" type="ordered locus">At5g01890</name>
</gene>
<accession>Q9LZV7</accession>